<keyword id="KW-0507">mRNA processing</keyword>
<keyword id="KW-0539">Nucleus</keyword>
<keyword id="KW-0677">Repeat</keyword>
<keyword id="KW-0694">RNA-binding</keyword>
<reference key="1">
    <citation type="journal article" date="2000" name="EMBO J.">
        <title>UBP1, a novel hnRNP-like protein that functions at multiple steps of higher plant nuclear pre-mRNA maturation.</title>
        <authorList>
            <person name="Lambermon M.H."/>
            <person name="Simpson G.G."/>
            <person name="Wieczorek Kirk D.A."/>
            <person name="Hemmings-Mieszczak M."/>
            <person name="Klahre U."/>
            <person name="Filipowicz W."/>
        </authorList>
    </citation>
    <scope>NUCLEOTIDE SEQUENCE [MRNA]</scope>
    <scope>FUNCTION</scope>
    <scope>SUBCELLULAR LOCATION</scope>
</reference>
<proteinExistence type="evidence at transcript level"/>
<comment type="function">
    <text evidence="3">Heterogeneous nuclear ribonucleoprotein (hnRNP)-like protein that acts as a component of the pre-mRNA processing machinery. Functions to facilitate the nuclear maturation of plant pre-mRNAs. Binds with high affinity to RNA molecules that contain AU-rich regions. May bind to the 3'-UTR and protects the mRNA against exonucleolytic degradation. Associates with nuclear poly(A)+ RNA in nucleus in vivo. Does not stimulate transcription or the 3' end cleavage/polyadenylation reaction.</text>
</comment>
<comment type="subcellular location">
    <subcellularLocation>
        <location evidence="3">Nucleus</location>
    </subcellularLocation>
</comment>
<gene>
    <name type="primary">UBP1</name>
</gene>
<dbReference type="EMBL" id="AJ272011">
    <property type="protein sequence ID" value="CAB75429.1"/>
    <property type="molecule type" value="mRNA"/>
</dbReference>
<dbReference type="SMR" id="Q9M427"/>
<dbReference type="GO" id="GO:0005829">
    <property type="term" value="C:cytosol"/>
    <property type="evidence" value="ECO:0007669"/>
    <property type="project" value="TreeGrafter"/>
</dbReference>
<dbReference type="GO" id="GO:0005634">
    <property type="term" value="C:nucleus"/>
    <property type="evidence" value="ECO:0007669"/>
    <property type="project" value="UniProtKB-SubCell"/>
</dbReference>
<dbReference type="GO" id="GO:0003729">
    <property type="term" value="F:mRNA binding"/>
    <property type="evidence" value="ECO:0007669"/>
    <property type="project" value="InterPro"/>
</dbReference>
<dbReference type="GO" id="GO:0006397">
    <property type="term" value="P:mRNA processing"/>
    <property type="evidence" value="ECO:0007669"/>
    <property type="project" value="UniProtKB-KW"/>
</dbReference>
<dbReference type="CDD" id="cd12614">
    <property type="entry name" value="RRM1_PUB1"/>
    <property type="match status" value="1"/>
</dbReference>
<dbReference type="CDD" id="cd12619">
    <property type="entry name" value="RRM2_PUB1"/>
    <property type="match status" value="1"/>
</dbReference>
<dbReference type="FunFam" id="3.30.70.330:FF:000256">
    <property type="entry name" value="oligouridylate-binding protein 1-like isoform X2"/>
    <property type="match status" value="1"/>
</dbReference>
<dbReference type="FunFam" id="3.30.70.330:FF:000275">
    <property type="entry name" value="oligouridylate-binding protein 1B-like isoform X2"/>
    <property type="match status" value="1"/>
</dbReference>
<dbReference type="FunFam" id="3.30.70.330:FF:000191">
    <property type="entry name" value="Oligouridylate-binding protein 1C"/>
    <property type="match status" value="1"/>
</dbReference>
<dbReference type="Gene3D" id="3.30.70.330">
    <property type="match status" value="3"/>
</dbReference>
<dbReference type="InterPro" id="IPR012677">
    <property type="entry name" value="Nucleotide-bd_a/b_plait_sf"/>
</dbReference>
<dbReference type="InterPro" id="IPR035979">
    <property type="entry name" value="RBD_domain_sf"/>
</dbReference>
<dbReference type="InterPro" id="IPR050825">
    <property type="entry name" value="RBM42_RBP45_47-like"/>
</dbReference>
<dbReference type="InterPro" id="IPR000504">
    <property type="entry name" value="RRM_dom"/>
</dbReference>
<dbReference type="InterPro" id="IPR003954">
    <property type="entry name" value="RRM_dom_euk"/>
</dbReference>
<dbReference type="PANTHER" id="PTHR47640:SF9">
    <property type="entry name" value="POLYADENYLATE-BINDING PROTEIN RBP47B"/>
    <property type="match status" value="1"/>
</dbReference>
<dbReference type="PANTHER" id="PTHR47640">
    <property type="entry name" value="TRNA SELENOCYSTEINE 1-ASSOCIATED PROTEIN 1-RELATED-RELATED"/>
    <property type="match status" value="1"/>
</dbReference>
<dbReference type="Pfam" id="PF00076">
    <property type="entry name" value="RRM_1"/>
    <property type="match status" value="3"/>
</dbReference>
<dbReference type="SMART" id="SM00360">
    <property type="entry name" value="RRM"/>
    <property type="match status" value="3"/>
</dbReference>
<dbReference type="SMART" id="SM00361">
    <property type="entry name" value="RRM_1"/>
    <property type="match status" value="2"/>
</dbReference>
<dbReference type="SUPFAM" id="SSF54928">
    <property type="entry name" value="RNA-binding domain, RBD"/>
    <property type="match status" value="3"/>
</dbReference>
<dbReference type="PROSITE" id="PS50102">
    <property type="entry name" value="RRM"/>
    <property type="match status" value="3"/>
</dbReference>
<organism>
    <name type="scientific">Nicotiana plumbaginifolia</name>
    <name type="common">Leadwort-leaved tobacco</name>
    <name type="synonym">Tex-Mex tobacco</name>
    <dbReference type="NCBI Taxonomy" id="4092"/>
    <lineage>
        <taxon>Eukaryota</taxon>
        <taxon>Viridiplantae</taxon>
        <taxon>Streptophyta</taxon>
        <taxon>Embryophyta</taxon>
        <taxon>Tracheophyta</taxon>
        <taxon>Spermatophyta</taxon>
        <taxon>Magnoliopsida</taxon>
        <taxon>eudicotyledons</taxon>
        <taxon>Gunneridae</taxon>
        <taxon>Pentapetalae</taxon>
        <taxon>asterids</taxon>
        <taxon>lamiids</taxon>
        <taxon>Solanales</taxon>
        <taxon>Solanaceae</taxon>
        <taxon>Nicotianoideae</taxon>
        <taxon>Nicotianeae</taxon>
        <taxon>Nicotiana</taxon>
    </lineage>
</organism>
<protein>
    <recommendedName>
        <fullName>Oligouridylate-binding protein 1</fullName>
        <shortName>NpUBP1</shortName>
    </recommendedName>
    <alternativeName>
        <fullName>Polyuridylate-binding protein UBP1</fullName>
        <shortName>Poly(U)-binding protein UBP1</shortName>
    </alternativeName>
</protein>
<feature type="chain" id="PRO_0000425433" description="Oligouridylate-binding protein 1">
    <location>
        <begin position="1"/>
        <end position="406"/>
    </location>
</feature>
<feature type="domain" description="RRM 1" evidence="1">
    <location>
        <begin position="49"/>
        <end position="123"/>
    </location>
</feature>
<feature type="domain" description="RRM 2" evidence="1">
    <location>
        <begin position="134"/>
        <end position="212"/>
    </location>
</feature>
<feature type="domain" description="RRM 3" evidence="1">
    <location>
        <begin position="255"/>
        <end position="329"/>
    </location>
</feature>
<feature type="region of interest" description="Disordered" evidence="2">
    <location>
        <begin position="231"/>
        <end position="250"/>
    </location>
</feature>
<accession>Q9M427</accession>
<sequence>MMQQQRLKQQQQQALMQQSLYHPGLLAPPQIEPILSGNLPPGFDSSTCRSVYVGNIHPQVTEPLLQEVFASTGPLEGCKLIRKDKSSYGFVDYFDRRSAALAIVTLNGRHLFGQPIKVNWAYASAQREDTSNHYNIFVGDLSPEVTDATLFACFSVYTSCSDARVMWDQKTGRSRGFGFVSFRNQQEAQSAINDLNGKWLGSRQIRCNWAAKGAGAVGEQNSDAKSVVELTSGTSDDGQEKVVNEDAPENNPQYTTVYVGNLAPEVTSVDLHRHFHALGAGVIEDVRIQRDKGFGFVRYSSHAEAARAIQLGNARLLFGKPVKCSWGSKPTPPGSSSNPLPPPAIGQIPGLSAMDLAAYQRQLALAKMAGAQAFMQPQGQRIGAPGQGIYDGGYGGIASTQPPMYF</sequence>
<evidence type="ECO:0000255" key="1">
    <source>
        <dbReference type="PROSITE-ProRule" id="PRU00176"/>
    </source>
</evidence>
<evidence type="ECO:0000256" key="2">
    <source>
        <dbReference type="SAM" id="MobiDB-lite"/>
    </source>
</evidence>
<evidence type="ECO:0000269" key="3">
    <source>
    </source>
</evidence>
<name>UBP1_NICPL</name>